<protein>
    <recommendedName>
        <fullName evidence="1">Large ribosomal subunit protein bL36</fullName>
    </recommendedName>
    <alternativeName>
        <fullName evidence="2">50S ribosomal protein L36</fullName>
    </alternativeName>
</protein>
<dbReference type="EMBL" id="AE017308">
    <property type="protein sequence ID" value="AAT27744.1"/>
    <property type="molecule type" value="Genomic_DNA"/>
</dbReference>
<dbReference type="RefSeq" id="WP_011264778.1">
    <property type="nucleotide sequence ID" value="NC_006908.1"/>
</dbReference>
<dbReference type="SMR" id="Q6KI32"/>
<dbReference type="STRING" id="267748.MMOB2580"/>
<dbReference type="KEGG" id="mmo:MMOB2580"/>
<dbReference type="eggNOG" id="COG0257">
    <property type="taxonomic scope" value="Bacteria"/>
</dbReference>
<dbReference type="HOGENOM" id="CLU_135723_6_2_14"/>
<dbReference type="OrthoDB" id="9802520at2"/>
<dbReference type="Proteomes" id="UP000009072">
    <property type="component" value="Chromosome"/>
</dbReference>
<dbReference type="GO" id="GO:0005737">
    <property type="term" value="C:cytoplasm"/>
    <property type="evidence" value="ECO:0007669"/>
    <property type="project" value="UniProtKB-ARBA"/>
</dbReference>
<dbReference type="GO" id="GO:1990904">
    <property type="term" value="C:ribonucleoprotein complex"/>
    <property type="evidence" value="ECO:0007669"/>
    <property type="project" value="UniProtKB-KW"/>
</dbReference>
<dbReference type="GO" id="GO:0005840">
    <property type="term" value="C:ribosome"/>
    <property type="evidence" value="ECO:0007669"/>
    <property type="project" value="UniProtKB-KW"/>
</dbReference>
<dbReference type="GO" id="GO:0003735">
    <property type="term" value="F:structural constituent of ribosome"/>
    <property type="evidence" value="ECO:0007669"/>
    <property type="project" value="InterPro"/>
</dbReference>
<dbReference type="GO" id="GO:0006412">
    <property type="term" value="P:translation"/>
    <property type="evidence" value="ECO:0007669"/>
    <property type="project" value="UniProtKB-UniRule"/>
</dbReference>
<dbReference type="HAMAP" id="MF_00251">
    <property type="entry name" value="Ribosomal_bL36"/>
    <property type="match status" value="1"/>
</dbReference>
<dbReference type="InterPro" id="IPR000473">
    <property type="entry name" value="Ribosomal_bL36"/>
</dbReference>
<dbReference type="InterPro" id="IPR035977">
    <property type="entry name" value="Ribosomal_bL36_sp"/>
</dbReference>
<dbReference type="NCBIfam" id="TIGR01022">
    <property type="entry name" value="rpmJ_bact"/>
    <property type="match status" value="1"/>
</dbReference>
<dbReference type="PANTHER" id="PTHR42888">
    <property type="entry name" value="50S RIBOSOMAL PROTEIN L36, CHLOROPLASTIC"/>
    <property type="match status" value="1"/>
</dbReference>
<dbReference type="PANTHER" id="PTHR42888:SF1">
    <property type="entry name" value="LARGE RIBOSOMAL SUBUNIT PROTEIN BL36C"/>
    <property type="match status" value="1"/>
</dbReference>
<dbReference type="Pfam" id="PF00444">
    <property type="entry name" value="Ribosomal_L36"/>
    <property type="match status" value="1"/>
</dbReference>
<dbReference type="SUPFAM" id="SSF57840">
    <property type="entry name" value="Ribosomal protein L36"/>
    <property type="match status" value="1"/>
</dbReference>
<dbReference type="PROSITE" id="PS00828">
    <property type="entry name" value="RIBOSOMAL_L36"/>
    <property type="match status" value="1"/>
</dbReference>
<evidence type="ECO:0000255" key="1">
    <source>
        <dbReference type="HAMAP-Rule" id="MF_00251"/>
    </source>
</evidence>
<evidence type="ECO:0000305" key="2"/>
<keyword id="KW-1185">Reference proteome</keyword>
<keyword id="KW-0687">Ribonucleoprotein</keyword>
<keyword id="KW-0689">Ribosomal protein</keyword>
<proteinExistence type="inferred from homology"/>
<gene>
    <name evidence="1" type="primary">rpmJ</name>
    <name type="ordered locus">MMOB2580</name>
</gene>
<accession>Q6KI32</accession>
<sequence length="38" mass="4338">MKVRASVKPMCKDCKIIKRKGAVRVICKTSPKHKQRQG</sequence>
<feature type="chain" id="PRO_0000126216" description="Large ribosomal subunit protein bL36">
    <location>
        <begin position="1"/>
        <end position="38"/>
    </location>
</feature>
<comment type="similarity">
    <text evidence="1">Belongs to the bacterial ribosomal protein bL36 family.</text>
</comment>
<reference key="1">
    <citation type="journal article" date="2004" name="Genome Res.">
        <title>The complete genome and proteome of Mycoplasma mobile.</title>
        <authorList>
            <person name="Jaffe J.D."/>
            <person name="Stange-Thomann N."/>
            <person name="Smith C."/>
            <person name="DeCaprio D."/>
            <person name="Fisher S."/>
            <person name="Butler J."/>
            <person name="Calvo S."/>
            <person name="Elkins T."/>
            <person name="FitzGerald M.G."/>
            <person name="Hafez N."/>
            <person name="Kodira C.D."/>
            <person name="Major J."/>
            <person name="Wang S."/>
            <person name="Wilkinson J."/>
            <person name="Nicol R."/>
            <person name="Nusbaum C."/>
            <person name="Birren B."/>
            <person name="Berg H.C."/>
            <person name="Church G.M."/>
        </authorList>
    </citation>
    <scope>NUCLEOTIDE SEQUENCE [LARGE SCALE GENOMIC DNA]</scope>
    <source>
        <strain>ATCC 43663 / NCTC 11711 / 163 K</strain>
    </source>
</reference>
<name>RL36_MYCM1</name>
<organism>
    <name type="scientific">Mycoplasma mobile (strain ATCC 43663 / 163K / NCTC 11711)</name>
    <name type="common">Mesomycoplasma mobile</name>
    <dbReference type="NCBI Taxonomy" id="267748"/>
    <lineage>
        <taxon>Bacteria</taxon>
        <taxon>Bacillati</taxon>
        <taxon>Mycoplasmatota</taxon>
        <taxon>Mycoplasmoidales</taxon>
        <taxon>Metamycoplasmataceae</taxon>
        <taxon>Mesomycoplasma</taxon>
    </lineage>
</organism>